<feature type="signal peptide" evidence="1">
    <location>
        <begin position="1"/>
        <end position="20"/>
    </location>
</feature>
<feature type="chain" id="PRO_1000085057" description="Foldase protein PrsA">
    <location>
        <begin position="21"/>
        <end position="320"/>
    </location>
</feature>
<feature type="domain" description="PpiC" evidence="1">
    <location>
        <begin position="139"/>
        <end position="245"/>
    </location>
</feature>
<feature type="region of interest" description="Disordered" evidence="2">
    <location>
        <begin position="159"/>
        <end position="198"/>
    </location>
</feature>
<feature type="lipid moiety-binding region" description="N-palmitoyl cysteine" evidence="1">
    <location>
        <position position="21"/>
    </location>
</feature>
<feature type="lipid moiety-binding region" description="S-diacylglycerol cysteine" evidence="1">
    <location>
        <position position="21"/>
    </location>
</feature>
<reference key="1">
    <citation type="book" date="2006" name="Gram positive pathogens, 2nd edition">
        <title>The Staphylococcus aureus NCTC 8325 genome.</title>
        <editorList>
            <person name="Fischetti V."/>
            <person name="Novick R."/>
            <person name="Ferretti J."/>
            <person name="Portnoy D."/>
            <person name="Rood J."/>
        </editorList>
        <authorList>
            <person name="Gillaspy A.F."/>
            <person name="Worrell V."/>
            <person name="Orvis J."/>
            <person name="Roe B.A."/>
            <person name="Dyer D.W."/>
            <person name="Iandolo J.J."/>
        </authorList>
    </citation>
    <scope>NUCLEOTIDE SEQUENCE [LARGE SCALE GENOMIC DNA]</scope>
    <source>
        <strain>NCTC 8325 / PS 47</strain>
    </source>
</reference>
<comment type="function">
    <text evidence="1">Plays a major role in protein secretion by helping the post-translocational extracellular folding of several secreted proteins.</text>
</comment>
<comment type="catalytic activity">
    <reaction evidence="1">
        <text>[protein]-peptidylproline (omega=180) = [protein]-peptidylproline (omega=0)</text>
        <dbReference type="Rhea" id="RHEA:16237"/>
        <dbReference type="Rhea" id="RHEA-COMP:10747"/>
        <dbReference type="Rhea" id="RHEA-COMP:10748"/>
        <dbReference type="ChEBI" id="CHEBI:83833"/>
        <dbReference type="ChEBI" id="CHEBI:83834"/>
        <dbReference type="EC" id="5.2.1.8"/>
    </reaction>
</comment>
<comment type="subcellular location">
    <subcellularLocation>
        <location evidence="1">Cell membrane</location>
        <topology evidence="1">Lipid-anchor</topology>
    </subcellularLocation>
</comment>
<comment type="similarity">
    <text evidence="1">Belongs to the PrsA family.</text>
</comment>
<name>PRSA_STAA8</name>
<evidence type="ECO:0000255" key="1">
    <source>
        <dbReference type="HAMAP-Rule" id="MF_01145"/>
    </source>
</evidence>
<evidence type="ECO:0000256" key="2">
    <source>
        <dbReference type="SAM" id="MobiDB-lite"/>
    </source>
</evidence>
<sequence>MKMINKLIVPVTASALLLGACGASATDSKENTLISSKAGDVTVADTMKKIGKDQIANASFTEMLNKILADKYKNKVNDKKIDEQIEKMQKQYGGKDKFEKALQQQGLTADKYKENLRTAAYHKELLSDKIKISDSEIKEDSKKASHILIKVKSKKSDKEGLDDKEAKQKAEEIQKEVSKDPSKFGEIAKKESMDTGSAKKDGELGYVLKGQTDKDFEKALFKLKDGEVSEVVKSSFGYHIIKADKPTDFNSEKQSLKEKLVDQKVQKNPKLLTDAYKDLLKEYDVDFKDRDIKSVVEDKILNPEKLKQGGAQGGQSGMSQ</sequence>
<proteinExistence type="inferred from homology"/>
<organism>
    <name type="scientific">Staphylococcus aureus (strain NCTC 8325 / PS 47)</name>
    <dbReference type="NCBI Taxonomy" id="93061"/>
    <lineage>
        <taxon>Bacteria</taxon>
        <taxon>Bacillati</taxon>
        <taxon>Bacillota</taxon>
        <taxon>Bacilli</taxon>
        <taxon>Bacillales</taxon>
        <taxon>Staphylococcaceae</taxon>
        <taxon>Staphylococcus</taxon>
    </lineage>
</organism>
<protein>
    <recommendedName>
        <fullName evidence="1">Foldase protein PrsA</fullName>
        <ecNumber evidence="1">5.2.1.8</ecNumber>
    </recommendedName>
</protein>
<gene>
    <name evidence="1" type="primary">prsA</name>
    <name type="ordered locus">SAOUHSC_01972</name>
</gene>
<dbReference type="EC" id="5.2.1.8" evidence="1"/>
<dbReference type="EMBL" id="CP000253">
    <property type="protein sequence ID" value="ABD31031.1"/>
    <property type="molecule type" value="Genomic_DNA"/>
</dbReference>
<dbReference type="RefSeq" id="WP_000782121.1">
    <property type="nucleotide sequence ID" value="NZ_LS483365.1"/>
</dbReference>
<dbReference type="RefSeq" id="YP_500469.1">
    <property type="nucleotide sequence ID" value="NC_007795.1"/>
</dbReference>
<dbReference type="SMR" id="Q2G2S6"/>
<dbReference type="STRING" id="93061.SAOUHSC_01972"/>
<dbReference type="PaxDb" id="1280-SAXN108_1870"/>
<dbReference type="GeneID" id="3920448"/>
<dbReference type="KEGG" id="sao:SAOUHSC_01972"/>
<dbReference type="PATRIC" id="fig|93061.5.peg.1794"/>
<dbReference type="eggNOG" id="COG0760">
    <property type="taxonomic scope" value="Bacteria"/>
</dbReference>
<dbReference type="HOGENOM" id="CLU_034646_6_2_9"/>
<dbReference type="OrthoDB" id="14196at2"/>
<dbReference type="PHI-base" id="PHI:7830"/>
<dbReference type="PRO" id="PR:Q2G2S6"/>
<dbReference type="Proteomes" id="UP000008816">
    <property type="component" value="Chromosome"/>
</dbReference>
<dbReference type="GO" id="GO:0005886">
    <property type="term" value="C:plasma membrane"/>
    <property type="evidence" value="ECO:0007669"/>
    <property type="project" value="UniProtKB-SubCell"/>
</dbReference>
<dbReference type="GO" id="GO:0003755">
    <property type="term" value="F:peptidyl-prolyl cis-trans isomerase activity"/>
    <property type="evidence" value="ECO:0007669"/>
    <property type="project" value="UniProtKB-UniRule"/>
</dbReference>
<dbReference type="GO" id="GO:0006457">
    <property type="term" value="P:protein folding"/>
    <property type="evidence" value="ECO:0007669"/>
    <property type="project" value="UniProtKB-UniRule"/>
</dbReference>
<dbReference type="Gene3D" id="3.10.50.40">
    <property type="match status" value="1"/>
</dbReference>
<dbReference type="Gene3D" id="1.10.4030.10">
    <property type="entry name" value="Porin chaperone SurA, peptide-binding domain"/>
    <property type="match status" value="1"/>
</dbReference>
<dbReference type="HAMAP" id="MF_01145">
    <property type="entry name" value="Foldase_PrsA"/>
    <property type="match status" value="1"/>
</dbReference>
<dbReference type="InterPro" id="IPR023059">
    <property type="entry name" value="Foldase_PrsA"/>
</dbReference>
<dbReference type="InterPro" id="IPR046357">
    <property type="entry name" value="PPIase_dom_sf"/>
</dbReference>
<dbReference type="InterPro" id="IPR000297">
    <property type="entry name" value="PPIase_PpiC"/>
</dbReference>
<dbReference type="InterPro" id="IPR050245">
    <property type="entry name" value="PrsA_foldase"/>
</dbReference>
<dbReference type="InterPro" id="IPR027304">
    <property type="entry name" value="Trigger_fact/SurA_dom_sf"/>
</dbReference>
<dbReference type="PANTHER" id="PTHR47245:SF1">
    <property type="entry name" value="FOLDASE PROTEIN PRSA"/>
    <property type="match status" value="1"/>
</dbReference>
<dbReference type="PANTHER" id="PTHR47245">
    <property type="entry name" value="PEPTIDYLPROLYL ISOMERASE"/>
    <property type="match status" value="1"/>
</dbReference>
<dbReference type="Pfam" id="PF00639">
    <property type="entry name" value="Rotamase"/>
    <property type="match status" value="1"/>
</dbReference>
<dbReference type="SUPFAM" id="SSF54534">
    <property type="entry name" value="FKBP-like"/>
    <property type="match status" value="1"/>
</dbReference>
<dbReference type="SUPFAM" id="SSF109998">
    <property type="entry name" value="Triger factor/SurA peptide-binding domain-like"/>
    <property type="match status" value="1"/>
</dbReference>
<dbReference type="PROSITE" id="PS50198">
    <property type="entry name" value="PPIC_PPIASE_2"/>
    <property type="match status" value="1"/>
</dbReference>
<dbReference type="PROSITE" id="PS51257">
    <property type="entry name" value="PROKAR_LIPOPROTEIN"/>
    <property type="match status" value="1"/>
</dbReference>
<keyword id="KW-1003">Cell membrane</keyword>
<keyword id="KW-0413">Isomerase</keyword>
<keyword id="KW-0449">Lipoprotein</keyword>
<keyword id="KW-0472">Membrane</keyword>
<keyword id="KW-0564">Palmitate</keyword>
<keyword id="KW-1185">Reference proteome</keyword>
<keyword id="KW-0697">Rotamase</keyword>
<keyword id="KW-0732">Signal</keyword>
<accession>Q2G2S6</accession>